<accession>P69444</accession>
<accession>A1E9J7</accession>
<accession>P00836</accession>
<accession>P20859</accession>
<evidence type="ECO:0000255" key="1">
    <source>
        <dbReference type="HAMAP-Rule" id="MF_00530"/>
    </source>
</evidence>
<geneLocation type="chloroplast"/>
<name>ATPE_HORVU</name>
<organism>
    <name type="scientific">Hordeum vulgare</name>
    <name type="common">Barley</name>
    <dbReference type="NCBI Taxonomy" id="4513"/>
    <lineage>
        <taxon>Eukaryota</taxon>
        <taxon>Viridiplantae</taxon>
        <taxon>Streptophyta</taxon>
        <taxon>Embryophyta</taxon>
        <taxon>Tracheophyta</taxon>
        <taxon>Spermatophyta</taxon>
        <taxon>Magnoliopsida</taxon>
        <taxon>Liliopsida</taxon>
        <taxon>Poales</taxon>
        <taxon>Poaceae</taxon>
        <taxon>BOP clade</taxon>
        <taxon>Pooideae</taxon>
        <taxon>Triticodae</taxon>
        <taxon>Triticeae</taxon>
        <taxon>Hordeinae</taxon>
        <taxon>Hordeum</taxon>
    </lineage>
</organism>
<feature type="chain" id="PRO_0000188268" description="ATP synthase epsilon chain, chloroplastic">
    <location>
        <begin position="1"/>
        <end position="137"/>
    </location>
</feature>
<protein>
    <recommendedName>
        <fullName evidence="1">ATP synthase epsilon chain, chloroplastic</fullName>
    </recommendedName>
    <alternativeName>
        <fullName evidence="1">ATP synthase F1 sector epsilon subunit</fullName>
    </alternativeName>
    <alternativeName>
        <fullName evidence="1">F-ATPase epsilon subunit</fullName>
    </alternativeName>
</protein>
<dbReference type="EMBL" id="X00408">
    <property type="protein sequence ID" value="CAA25115.1"/>
    <property type="molecule type" value="Genomic_DNA"/>
</dbReference>
<dbReference type="EMBL" id="EF115541">
    <property type="protein sequence ID" value="ABK79419.1"/>
    <property type="molecule type" value="Genomic_DNA"/>
</dbReference>
<dbReference type="PIR" id="A01037">
    <property type="entry name" value="PWBHE"/>
</dbReference>
<dbReference type="RefSeq" id="YP_010144431.1">
    <property type="nucleotide sequence ID" value="NC_056985.1"/>
</dbReference>
<dbReference type="RefSeq" id="YP_874659.1">
    <property type="nucleotide sequence ID" value="NC_008590.1"/>
</dbReference>
<dbReference type="SMR" id="P69444"/>
<dbReference type="GeneID" id="4525185"/>
<dbReference type="GeneID" id="67140722"/>
<dbReference type="OMA" id="RLEPSHY"/>
<dbReference type="GO" id="GO:0009535">
    <property type="term" value="C:chloroplast thylakoid membrane"/>
    <property type="evidence" value="ECO:0007669"/>
    <property type="project" value="UniProtKB-SubCell"/>
</dbReference>
<dbReference type="GO" id="GO:0045259">
    <property type="term" value="C:proton-transporting ATP synthase complex"/>
    <property type="evidence" value="ECO:0007669"/>
    <property type="project" value="UniProtKB-KW"/>
</dbReference>
<dbReference type="GO" id="GO:0005524">
    <property type="term" value="F:ATP binding"/>
    <property type="evidence" value="ECO:0007669"/>
    <property type="project" value="UniProtKB-UniRule"/>
</dbReference>
<dbReference type="GO" id="GO:0046933">
    <property type="term" value="F:proton-transporting ATP synthase activity, rotational mechanism"/>
    <property type="evidence" value="ECO:0007669"/>
    <property type="project" value="UniProtKB-UniRule"/>
</dbReference>
<dbReference type="CDD" id="cd12152">
    <property type="entry name" value="F1-ATPase_delta"/>
    <property type="match status" value="1"/>
</dbReference>
<dbReference type="FunFam" id="2.60.15.10:FF:000002">
    <property type="entry name" value="ATP synthase epsilon chain, chloroplastic"/>
    <property type="match status" value="1"/>
</dbReference>
<dbReference type="Gene3D" id="6.10.140.480">
    <property type="match status" value="1"/>
</dbReference>
<dbReference type="Gene3D" id="2.60.15.10">
    <property type="entry name" value="F0F1 ATP synthase delta/epsilon subunit, N-terminal"/>
    <property type="match status" value="1"/>
</dbReference>
<dbReference type="HAMAP" id="MF_00530">
    <property type="entry name" value="ATP_synth_epsil_bac"/>
    <property type="match status" value="1"/>
</dbReference>
<dbReference type="InterPro" id="IPR036794">
    <property type="entry name" value="ATP_F1_dsu/esu_C_sf"/>
</dbReference>
<dbReference type="InterPro" id="IPR001469">
    <property type="entry name" value="ATP_synth_F1_dsu/esu"/>
</dbReference>
<dbReference type="InterPro" id="IPR020546">
    <property type="entry name" value="ATP_synth_F1_dsu/esu_N"/>
</dbReference>
<dbReference type="InterPro" id="IPR020547">
    <property type="entry name" value="ATP_synth_F1_esu_C"/>
</dbReference>
<dbReference type="InterPro" id="IPR036771">
    <property type="entry name" value="ATPsynth_dsu/esu_N"/>
</dbReference>
<dbReference type="NCBIfam" id="TIGR01216">
    <property type="entry name" value="ATP_synt_epsi"/>
    <property type="match status" value="1"/>
</dbReference>
<dbReference type="PANTHER" id="PTHR13822">
    <property type="entry name" value="ATP SYNTHASE DELTA/EPSILON CHAIN"/>
    <property type="match status" value="1"/>
</dbReference>
<dbReference type="PANTHER" id="PTHR13822:SF10">
    <property type="entry name" value="ATP SYNTHASE EPSILON CHAIN, CHLOROPLASTIC"/>
    <property type="match status" value="1"/>
</dbReference>
<dbReference type="Pfam" id="PF00401">
    <property type="entry name" value="ATP-synt_DE"/>
    <property type="match status" value="1"/>
</dbReference>
<dbReference type="Pfam" id="PF02823">
    <property type="entry name" value="ATP-synt_DE_N"/>
    <property type="match status" value="1"/>
</dbReference>
<dbReference type="SUPFAM" id="SSF46604">
    <property type="entry name" value="Epsilon subunit of F1F0-ATP synthase C-terminal domain"/>
    <property type="match status" value="1"/>
</dbReference>
<dbReference type="SUPFAM" id="SSF51344">
    <property type="entry name" value="Epsilon subunit of F1F0-ATP synthase N-terminal domain"/>
    <property type="match status" value="1"/>
</dbReference>
<comment type="function">
    <text evidence="1">Produces ATP from ADP in the presence of a proton gradient across the membrane.</text>
</comment>
<comment type="subunit">
    <text evidence="1">F-type ATPases have 2 components, CF(1) - the catalytic core - and CF(0) - the membrane proton channel. CF(1) has five subunits: alpha(3), beta(3), gamma(1), delta(1), epsilon(1). CF(0) has three main subunits: a, b and c.</text>
</comment>
<comment type="subcellular location">
    <subcellularLocation>
        <location evidence="1">Plastid</location>
        <location evidence="1">Chloroplast thylakoid membrane</location>
        <topology evidence="1">Peripheral membrane protein</topology>
    </subcellularLocation>
</comment>
<comment type="similarity">
    <text evidence="1">Belongs to the ATPase epsilon chain family.</text>
</comment>
<reference key="1">
    <citation type="journal article" date="1984" name="Nucleic Acids Res.">
        <title>The barley chloroplast DNA atpBE, trnM2, and trnV1 loci.</title>
        <authorList>
            <person name="Zurawski G."/>
            <person name="Clegg M.T."/>
        </authorList>
    </citation>
    <scope>NUCLEOTIDE SEQUENCE [GENOMIC DNA]</scope>
    <source>
        <strain>cv. Clipper</strain>
    </source>
</reference>
<reference key="2">
    <citation type="journal article" date="2007" name="Theor. Appl. Genet.">
        <title>Complete chloroplast genome sequences of Hordeum vulgare, Sorghum bicolor and Agrostis stolonifera, and comparative analyses with other grass genomes.</title>
        <authorList>
            <person name="Saski C."/>
            <person name="Lee S.-B."/>
            <person name="Fjellheim S."/>
            <person name="Guda C."/>
            <person name="Jansen R.K."/>
            <person name="Luo H."/>
            <person name="Tomkins J."/>
            <person name="Rognli O.A."/>
            <person name="Daniell H."/>
            <person name="Clarke J.L."/>
        </authorList>
    </citation>
    <scope>NUCLEOTIDE SEQUENCE [LARGE SCALE GENOMIC DNA]</scope>
    <source>
        <strain>cv. Morex</strain>
    </source>
</reference>
<sequence length="137" mass="15218">MKLNLYVLTPKRIIWDCEVKEIILSTNSGQIGVLPNHAPINTAVDMGPLRIRLLNDQWLTAVLWSGFARIVNNEIIILGNDAELGSDIDPEEAQKALEIAEANLSKAEGTKDLVEAKLALRRARIRIEAVNWIPPSN</sequence>
<gene>
    <name evidence="1" type="primary">atpE</name>
</gene>
<keyword id="KW-0066">ATP synthesis</keyword>
<keyword id="KW-0139">CF(1)</keyword>
<keyword id="KW-0150">Chloroplast</keyword>
<keyword id="KW-0375">Hydrogen ion transport</keyword>
<keyword id="KW-0406">Ion transport</keyword>
<keyword id="KW-0472">Membrane</keyword>
<keyword id="KW-0934">Plastid</keyword>
<keyword id="KW-0793">Thylakoid</keyword>
<keyword id="KW-0813">Transport</keyword>
<proteinExistence type="inferred from homology"/>